<name>DTD_SHEB9</name>
<accession>A9KXA7</accession>
<keyword id="KW-0963">Cytoplasm</keyword>
<keyword id="KW-0378">Hydrolase</keyword>
<keyword id="KW-0694">RNA-binding</keyword>
<keyword id="KW-0820">tRNA-binding</keyword>
<evidence type="ECO:0000255" key="1">
    <source>
        <dbReference type="HAMAP-Rule" id="MF_00518"/>
    </source>
</evidence>
<gene>
    <name evidence="1" type="primary">dtd</name>
    <name type="ordered locus">Sbal195_0322</name>
</gene>
<organism>
    <name type="scientific">Shewanella baltica (strain OS195)</name>
    <dbReference type="NCBI Taxonomy" id="399599"/>
    <lineage>
        <taxon>Bacteria</taxon>
        <taxon>Pseudomonadati</taxon>
        <taxon>Pseudomonadota</taxon>
        <taxon>Gammaproteobacteria</taxon>
        <taxon>Alteromonadales</taxon>
        <taxon>Shewanellaceae</taxon>
        <taxon>Shewanella</taxon>
    </lineage>
</organism>
<dbReference type="EC" id="3.1.1.96" evidence="1"/>
<dbReference type="EMBL" id="CP000891">
    <property type="protein sequence ID" value="ABX47503.1"/>
    <property type="molecule type" value="Genomic_DNA"/>
</dbReference>
<dbReference type="RefSeq" id="WP_006079790.1">
    <property type="nucleotide sequence ID" value="NC_009997.1"/>
</dbReference>
<dbReference type="SMR" id="A9KXA7"/>
<dbReference type="GeneID" id="11770668"/>
<dbReference type="KEGG" id="sbn:Sbal195_0322"/>
<dbReference type="HOGENOM" id="CLU_076901_1_0_6"/>
<dbReference type="Proteomes" id="UP000000770">
    <property type="component" value="Chromosome"/>
</dbReference>
<dbReference type="GO" id="GO:0005737">
    <property type="term" value="C:cytoplasm"/>
    <property type="evidence" value="ECO:0007669"/>
    <property type="project" value="UniProtKB-SubCell"/>
</dbReference>
<dbReference type="GO" id="GO:0051500">
    <property type="term" value="F:D-tyrosyl-tRNA(Tyr) deacylase activity"/>
    <property type="evidence" value="ECO:0007669"/>
    <property type="project" value="TreeGrafter"/>
</dbReference>
<dbReference type="GO" id="GO:0106026">
    <property type="term" value="F:Gly-tRNA(Ala) deacylase activity"/>
    <property type="evidence" value="ECO:0007669"/>
    <property type="project" value="UniProtKB-UniRule"/>
</dbReference>
<dbReference type="GO" id="GO:0043908">
    <property type="term" value="F:Ser(Gly)-tRNA(Ala) hydrolase activity"/>
    <property type="evidence" value="ECO:0007669"/>
    <property type="project" value="UniProtKB-UniRule"/>
</dbReference>
<dbReference type="GO" id="GO:0000049">
    <property type="term" value="F:tRNA binding"/>
    <property type="evidence" value="ECO:0007669"/>
    <property type="project" value="UniProtKB-UniRule"/>
</dbReference>
<dbReference type="GO" id="GO:0019478">
    <property type="term" value="P:D-amino acid catabolic process"/>
    <property type="evidence" value="ECO:0007669"/>
    <property type="project" value="UniProtKB-UniRule"/>
</dbReference>
<dbReference type="CDD" id="cd00563">
    <property type="entry name" value="Dtyr_deacylase"/>
    <property type="match status" value="1"/>
</dbReference>
<dbReference type="FunFam" id="3.50.80.10:FF:000001">
    <property type="entry name" value="D-aminoacyl-tRNA deacylase"/>
    <property type="match status" value="1"/>
</dbReference>
<dbReference type="Gene3D" id="3.50.80.10">
    <property type="entry name" value="D-tyrosyl-tRNA(Tyr) deacylase"/>
    <property type="match status" value="1"/>
</dbReference>
<dbReference type="HAMAP" id="MF_00518">
    <property type="entry name" value="Deacylase_Dtd"/>
    <property type="match status" value="1"/>
</dbReference>
<dbReference type="InterPro" id="IPR003732">
    <property type="entry name" value="Daa-tRNA_deacyls_DTD"/>
</dbReference>
<dbReference type="InterPro" id="IPR023509">
    <property type="entry name" value="DTD-like_sf"/>
</dbReference>
<dbReference type="NCBIfam" id="TIGR00256">
    <property type="entry name" value="D-aminoacyl-tRNA deacylase"/>
    <property type="match status" value="1"/>
</dbReference>
<dbReference type="PANTHER" id="PTHR10472:SF5">
    <property type="entry name" value="D-AMINOACYL-TRNA DEACYLASE 1"/>
    <property type="match status" value="1"/>
</dbReference>
<dbReference type="PANTHER" id="PTHR10472">
    <property type="entry name" value="D-TYROSYL-TRNA TYR DEACYLASE"/>
    <property type="match status" value="1"/>
</dbReference>
<dbReference type="Pfam" id="PF02580">
    <property type="entry name" value="Tyr_Deacylase"/>
    <property type="match status" value="1"/>
</dbReference>
<dbReference type="SUPFAM" id="SSF69500">
    <property type="entry name" value="DTD-like"/>
    <property type="match status" value="1"/>
</dbReference>
<comment type="function">
    <text evidence="1">An aminoacyl-tRNA editing enzyme that deacylates mischarged D-aminoacyl-tRNAs. Also deacylates mischarged glycyl-tRNA(Ala), protecting cells against glycine mischarging by AlaRS. Acts via tRNA-based rather than protein-based catalysis; rejects L-amino acids rather than detecting D-amino acids in the active site. By recycling D-aminoacyl-tRNA to D-amino acids and free tRNA molecules, this enzyme counteracts the toxicity associated with the formation of D-aminoacyl-tRNA entities in vivo and helps enforce protein L-homochirality.</text>
</comment>
<comment type="catalytic activity">
    <reaction evidence="1">
        <text>glycyl-tRNA(Ala) + H2O = tRNA(Ala) + glycine + H(+)</text>
        <dbReference type="Rhea" id="RHEA:53744"/>
        <dbReference type="Rhea" id="RHEA-COMP:9657"/>
        <dbReference type="Rhea" id="RHEA-COMP:13640"/>
        <dbReference type="ChEBI" id="CHEBI:15377"/>
        <dbReference type="ChEBI" id="CHEBI:15378"/>
        <dbReference type="ChEBI" id="CHEBI:57305"/>
        <dbReference type="ChEBI" id="CHEBI:78442"/>
        <dbReference type="ChEBI" id="CHEBI:78522"/>
        <dbReference type="EC" id="3.1.1.96"/>
    </reaction>
</comment>
<comment type="catalytic activity">
    <reaction evidence="1">
        <text>a D-aminoacyl-tRNA + H2O = a tRNA + a D-alpha-amino acid + H(+)</text>
        <dbReference type="Rhea" id="RHEA:13953"/>
        <dbReference type="Rhea" id="RHEA-COMP:10123"/>
        <dbReference type="Rhea" id="RHEA-COMP:10124"/>
        <dbReference type="ChEBI" id="CHEBI:15377"/>
        <dbReference type="ChEBI" id="CHEBI:15378"/>
        <dbReference type="ChEBI" id="CHEBI:59871"/>
        <dbReference type="ChEBI" id="CHEBI:78442"/>
        <dbReference type="ChEBI" id="CHEBI:79333"/>
        <dbReference type="EC" id="3.1.1.96"/>
    </reaction>
</comment>
<comment type="subunit">
    <text evidence="1">Homodimer.</text>
</comment>
<comment type="subcellular location">
    <subcellularLocation>
        <location evidence="1">Cytoplasm</location>
    </subcellularLocation>
</comment>
<comment type="domain">
    <text evidence="1">A Gly-cisPro motif from one monomer fits into the active site of the other monomer to allow specific chiral rejection of L-amino acids.</text>
</comment>
<comment type="similarity">
    <text evidence="1">Belongs to the DTD family.</text>
</comment>
<sequence>MIALIQRVSRASVVVDNQTIGAIDKGLLVLLGVEQEDTREKMEKLATKVMSYRVFSDENGKMNLNLEQVGGSLLVVSQFTLAADTGRGLRPSFSGAGTPDQALALYEEFVAFCRAKGVTTETGQFGADMQVSLVNDGPVTFNLQV</sequence>
<proteinExistence type="inferred from homology"/>
<feature type="chain" id="PRO_1000081665" description="D-aminoacyl-tRNA deacylase">
    <location>
        <begin position="1"/>
        <end position="145"/>
    </location>
</feature>
<feature type="short sequence motif" description="Gly-cisPro motif, important for rejection of L-amino acids" evidence="1">
    <location>
        <begin position="137"/>
        <end position="138"/>
    </location>
</feature>
<reference key="1">
    <citation type="submission" date="2007-11" db="EMBL/GenBank/DDBJ databases">
        <title>Complete sequence of chromosome of Shewanella baltica OS195.</title>
        <authorList>
            <consortium name="US DOE Joint Genome Institute"/>
            <person name="Copeland A."/>
            <person name="Lucas S."/>
            <person name="Lapidus A."/>
            <person name="Barry K."/>
            <person name="Glavina del Rio T."/>
            <person name="Dalin E."/>
            <person name="Tice H."/>
            <person name="Pitluck S."/>
            <person name="Chain P."/>
            <person name="Malfatti S."/>
            <person name="Shin M."/>
            <person name="Vergez L."/>
            <person name="Schmutz J."/>
            <person name="Larimer F."/>
            <person name="Land M."/>
            <person name="Hauser L."/>
            <person name="Kyrpides N."/>
            <person name="Kim E."/>
            <person name="Brettar I."/>
            <person name="Rodrigues J."/>
            <person name="Konstantinidis K."/>
            <person name="Klappenbach J."/>
            <person name="Hofle M."/>
            <person name="Tiedje J."/>
            <person name="Richardson P."/>
        </authorList>
    </citation>
    <scope>NUCLEOTIDE SEQUENCE [LARGE SCALE GENOMIC DNA]</scope>
    <source>
        <strain>OS195</strain>
    </source>
</reference>
<protein>
    <recommendedName>
        <fullName evidence="1">D-aminoacyl-tRNA deacylase</fullName>
        <shortName evidence="1">DTD</shortName>
        <ecNumber evidence="1">3.1.1.96</ecNumber>
    </recommendedName>
    <alternativeName>
        <fullName evidence="1">Gly-tRNA(Ala) deacylase</fullName>
    </alternativeName>
</protein>